<protein>
    <recommendedName>
        <fullName evidence="10">Cyclin-dependent kinase 2-interacting protein</fullName>
        <shortName evidence="10">CDK2-interacting protein</shortName>
    </recommendedName>
</protein>
<accession>Q9BW66</accession>
<accession>F5H7P3</accession>
<accession>F5H8A7</accession>
<accession>Q9NPF9</accession>
<evidence type="ECO:0000255" key="1"/>
<evidence type="ECO:0000269" key="2">
    <source>
    </source>
</evidence>
<evidence type="ECO:0000269" key="3">
    <source>
    </source>
</evidence>
<evidence type="ECO:0000269" key="4">
    <source>
    </source>
</evidence>
<evidence type="ECO:0000269" key="5">
    <source>
    </source>
</evidence>
<evidence type="ECO:0000269" key="6">
    <source>
    </source>
</evidence>
<evidence type="ECO:0000269" key="7">
    <source>
    </source>
</evidence>
<evidence type="ECO:0000303" key="8">
    <source>
    </source>
</evidence>
<evidence type="ECO:0000303" key="9">
    <source>
    </source>
</evidence>
<evidence type="ECO:0000303" key="10">
    <source>
    </source>
</evidence>
<evidence type="ECO:0000303" key="11">
    <source>
    </source>
</evidence>
<evidence type="ECO:0000305" key="12"/>
<evidence type="ECO:0000312" key="13">
    <source>
        <dbReference type="HGNC" id="HGNC:23789"/>
    </source>
</evidence>
<evidence type="ECO:0007744" key="14">
    <source>
        <dbReference type="PDB" id="8CIH"/>
    </source>
</evidence>
<evidence type="ECO:0007744" key="15">
    <source>
    </source>
</evidence>
<evidence type="ECO:0007744" key="16">
    <source>
    </source>
</evidence>
<evidence type="ECO:0007829" key="17">
    <source>
        <dbReference type="PDB" id="8CIH"/>
    </source>
</evidence>
<gene>
    <name evidence="11 13" type="primary">CINP</name>
</gene>
<proteinExistence type="evidence at protein level"/>
<comment type="function">
    <text evidence="2 4 6 7">Component of the DNA replication complex, which interacts with two kinases, CDK2 and CDC7, thereby providing a functional and physical link between CDK2 and CDC7 during firing of the origins of replication (PubMed:16082200, PubMed:19889979). Regulates ATR-mediated checkpoint signaling in response to DNA damage (PubMed:16082200, PubMed:19889979). Part of the 55LCC heterohexameric ATPase complex which is chromatin-associated and promotes replisome proteostasis to maintain replication fork progression and genome stability. Required for replication fork progression, sister chromatid cohesion, and chromosome stability. The ATPase activity is specifically enhanced by replication fork DNA and is coupled to cysteine protease-dependent cleavage of replisome substrates in response to replication fork damage. Uses ATPase activity to process replisome substrates in S-phase, facilitating their proteolytic turnover from chromatin to ensure DNA replication and mitotic fidelity (PubMed:38554706). As part of 55LCC complex, also involved in the cytoplasmic maturation steps of pre-60S ribosomal particles by promoting the release of shuttling protein RSL24D1/RLP24 from the pre-ribosomal particles (PubMed:35354024).</text>
</comment>
<comment type="subunit">
    <text evidence="2 4 5 6 7">Homodimer (PubMed:16082200). Part of the 55LCC heterohexameric ATPase complex composed at least of AIRIM, AFG2A, AFG2B and CINP (PubMed:38554706). Interacts with AIRIM (PubMed:35354024). Interacts with CDK2 and CDC7 (PubMed:16082200). Interacts with the components of the replication complex, MCM2, MCM3, MCM4, MCM5, MCM6, MCM7 and with ORC2-containing complexes (PubMed:16082200). Interacts with ATRIP (PubMed:19889979). Interacts with CEP152 (PubMed:21131973). Associates with pre-60S ribosomal particles (PubMed:35354024).</text>
</comment>
<comment type="interaction">
    <interactant intactId="EBI-739784">
        <id>Q9BW66</id>
    </interactant>
    <interactant intactId="EBI-8643161">
        <id>Q9NX04</id>
        <label>AIRIM</label>
    </interactant>
    <organismsDiffer>false</organismsDiffer>
    <experiments>14</experiments>
</comment>
<comment type="interaction">
    <interactant intactId="EBI-739784">
        <id>Q9BW66</id>
    </interactant>
    <interactant intactId="EBI-746752">
        <id>Q9Y2J4</id>
        <label>AMOTL2</label>
    </interactant>
    <organismsDiffer>false</organismsDiffer>
    <experiments>3</experiments>
</comment>
<comment type="interaction">
    <interactant intactId="EBI-739784">
        <id>Q9BW66</id>
    </interactant>
    <interactant intactId="EBI-968983">
        <id>Q13535</id>
        <label>ATR</label>
    </interactant>
    <organismsDiffer>false</organismsDiffer>
    <experiments>5</experiments>
</comment>
<comment type="interaction">
    <interactant intactId="EBI-739784">
        <id>Q9BW66</id>
    </interactant>
    <interactant intactId="EBI-747353">
        <id>Q8WXE1</id>
        <label>ATRIP</label>
    </interactant>
    <organismsDiffer>false</organismsDiffer>
    <experiments>9</experiments>
</comment>
<comment type="interaction">
    <interactant intactId="EBI-739784">
        <id>Q9BW66</id>
    </interactant>
    <interactant intactId="EBI-2548012">
        <id>Q9H2G9</id>
        <label>BLZF1</label>
    </interactant>
    <organismsDiffer>false</organismsDiffer>
    <experiments>7</experiments>
</comment>
<comment type="interaction">
    <interactant intactId="EBI-739784">
        <id>Q9BW66</id>
    </interactant>
    <interactant intactId="EBI-710091">
        <id>Q9BX70</id>
        <label>BTBD2</label>
    </interactant>
    <organismsDiffer>false</organismsDiffer>
    <experiments>3</experiments>
</comment>
<comment type="interaction">
    <interactant intactId="EBI-739784">
        <id>Q9BW66</id>
    </interactant>
    <interactant intactId="EBI-12095166">
        <id>Q8NEF3-2</id>
        <label>CCDC112</label>
    </interactant>
    <organismsDiffer>false</organismsDiffer>
    <experiments>3</experiments>
</comment>
<comment type="interaction">
    <interactant intactId="EBI-739784">
        <id>Q9BW66</id>
    </interactant>
    <interactant intactId="EBI-11901329">
        <id>Q6P656</id>
        <label>CFAP161</label>
    </interactant>
    <organismsDiffer>false</organismsDiffer>
    <experiments>3</experiments>
</comment>
<comment type="interaction">
    <interactant intactId="EBI-739784">
        <id>Q9BW66</id>
    </interactant>
    <interactant intactId="EBI-739780">
        <id>Q96AJ1</id>
        <label>CLUAP1</label>
    </interactant>
    <organismsDiffer>false</organismsDiffer>
    <experiments>5</experiments>
</comment>
<comment type="interaction">
    <interactant intactId="EBI-739784">
        <id>Q9BW66</id>
    </interactant>
    <interactant intactId="EBI-9091495">
        <id>Q96JB2-2</id>
        <label>COG3</label>
    </interactant>
    <organismsDiffer>false</organismsDiffer>
    <experiments>3</experiments>
</comment>
<comment type="interaction">
    <interactant intactId="EBI-739784">
        <id>Q9BW66</id>
    </interactant>
    <interactant intactId="EBI-7225287">
        <id>Q96MY7</id>
        <label>FAM161B</label>
    </interactant>
    <organismsDiffer>false</organismsDiffer>
    <experiments>3</experiments>
</comment>
<comment type="interaction">
    <interactant intactId="EBI-739784">
        <id>Q9BW66</id>
    </interactant>
    <interactant intactId="EBI-10244131">
        <id>Q8TES7-6</id>
        <label>FBF1</label>
    </interactant>
    <organismsDiffer>false</organismsDiffer>
    <experiments>3</experiments>
</comment>
<comment type="interaction">
    <interactant intactId="EBI-739784">
        <id>Q9BW66</id>
    </interactant>
    <interactant intactId="EBI-744935">
        <id>Q9BVV2</id>
        <label>FNDC11</label>
    </interactant>
    <organismsDiffer>false</organismsDiffer>
    <experiments>3</experiments>
</comment>
<comment type="interaction">
    <interactant intactId="EBI-739784">
        <id>Q9BW66</id>
    </interactant>
    <interactant intactId="EBI-1052570">
        <id>O95995</id>
        <label>GAS8</label>
    </interactant>
    <organismsDiffer>false</organismsDiffer>
    <experiments>3</experiments>
</comment>
<comment type="interaction">
    <interactant intactId="EBI-739784">
        <id>Q9BW66</id>
    </interactant>
    <interactant intactId="EBI-618309">
        <id>Q08379</id>
        <label>GOLGA2</label>
    </interactant>
    <organismsDiffer>false</organismsDiffer>
    <experiments>6</experiments>
</comment>
<comment type="interaction">
    <interactant intactId="EBI-739784">
        <id>Q9BW66</id>
    </interactant>
    <interactant intactId="EBI-12035052">
        <id>A5PKX9</id>
        <label>INADL</label>
    </interactant>
    <organismsDiffer>false</organismsDiffer>
    <experiments>3</experiments>
</comment>
<comment type="interaction">
    <interactant intactId="EBI-739784">
        <id>Q9BW66</id>
    </interactant>
    <interactant intactId="EBI-6509505">
        <id>Q0VD86</id>
        <label>INCA1</label>
    </interactant>
    <organismsDiffer>false</organismsDiffer>
    <experiments>3</experiments>
</comment>
<comment type="interaction">
    <interactant intactId="EBI-739784">
        <id>Q9BW66</id>
    </interactant>
    <interactant intactId="EBI-2556193">
        <id>Q63ZY3</id>
        <label>KANK2</label>
    </interactant>
    <organismsDiffer>false</organismsDiffer>
    <experiments>3</experiments>
</comment>
<comment type="interaction">
    <interactant intactId="EBI-739784">
        <id>Q9BW66</id>
    </interactant>
    <interactant intactId="EBI-5651459">
        <id>P43357</id>
        <label>MAGEA3</label>
    </interactant>
    <organismsDiffer>false</organismsDiffer>
    <experiments>3</experiments>
</comment>
<comment type="interaction">
    <interactant intactId="EBI-739784">
        <id>Q9BW66</id>
    </interactant>
    <interactant intactId="EBI-16439278">
        <id>Q6FHY5</id>
        <label>MEOX2</label>
    </interactant>
    <organismsDiffer>false</organismsDiffer>
    <experiments>3</experiments>
</comment>
<comment type="interaction">
    <interactant intactId="EBI-739784">
        <id>Q9BW66</id>
    </interactant>
    <interactant intactId="EBI-11977115">
        <id>Q9UPX6</id>
        <label>MINAR1</label>
    </interactant>
    <organismsDiffer>false</organismsDiffer>
    <experiments>3</experiments>
</comment>
<comment type="interaction">
    <interactant intactId="EBI-739784">
        <id>Q9BW66</id>
    </interactant>
    <interactant intactId="EBI-11111575">
        <id>Q9H3L0</id>
        <label>MMADHC</label>
    </interactant>
    <organismsDiffer>false</organismsDiffer>
    <experiments>3</experiments>
</comment>
<comment type="interaction">
    <interactant intactId="EBI-739784">
        <id>Q9BW66</id>
    </interactant>
    <interactant intactId="EBI-2637198">
        <id>Q08AG7</id>
        <label>MZT1</label>
    </interactant>
    <organismsDiffer>false</organismsDiffer>
    <experiments>5</experiments>
</comment>
<comment type="interaction">
    <interactant intactId="EBI-739784">
        <id>Q9BW66</id>
    </interactant>
    <interactant intactId="EBI-1246238">
        <id>P17568</id>
        <label>NDUFB7</label>
    </interactant>
    <organismsDiffer>false</organismsDiffer>
    <experiments>3</experiments>
</comment>
<comment type="interaction">
    <interactant intactId="EBI-739784">
        <id>Q9BW66</id>
    </interactant>
    <interactant intactId="EBI-747278">
        <id>P26367</id>
        <label>PAX6</label>
    </interactant>
    <organismsDiffer>false</organismsDiffer>
    <experiments>3</experiments>
</comment>
<comment type="interaction">
    <interactant intactId="EBI-739784">
        <id>Q9BW66</id>
    </interactant>
    <interactant intactId="EBI-12029004">
        <id>P78424</id>
        <label>POU6F2</label>
    </interactant>
    <organismsDiffer>false</organismsDiffer>
    <experiments>3</experiments>
</comment>
<comment type="interaction">
    <interactant intactId="EBI-739784">
        <id>Q9BW66</id>
    </interactant>
    <interactant intactId="EBI-741137">
        <id>O43663</id>
        <label>PRC1</label>
    </interactant>
    <organismsDiffer>false</organismsDiffer>
    <experiments>3</experiments>
</comment>
<comment type="interaction">
    <interactant intactId="EBI-739784">
        <id>Q9BW66</id>
    </interactant>
    <interactant intactId="EBI-12828023">
        <id>P54821</id>
        <label>PRRX1</label>
    </interactant>
    <organismsDiffer>false</organismsDiffer>
    <experiments>3</experiments>
</comment>
<comment type="interaction">
    <interactant intactId="EBI-739784">
        <id>Q9BW66</id>
    </interactant>
    <interactant intactId="EBI-359352">
        <id>P25786</id>
        <label>PSMA1</label>
    </interactant>
    <organismsDiffer>false</organismsDiffer>
    <experiments>3</experiments>
</comment>
<comment type="interaction">
    <interactant intactId="EBI-739784">
        <id>Q9BW66</id>
    </interactant>
    <interactant intactId="EBI-307352">
        <id>Q04864</id>
        <label>REL</label>
    </interactant>
    <organismsDiffer>false</organismsDiffer>
    <experiments>3</experiments>
</comment>
<comment type="interaction">
    <interactant intactId="EBI-739784">
        <id>Q9BW66</id>
    </interactant>
    <interactant intactId="EBI-10829018">
        <id>Q04864-2</id>
        <label>REL</label>
    </interactant>
    <organismsDiffer>false</organismsDiffer>
    <experiments>3</experiments>
</comment>
<comment type="interaction">
    <interactant intactId="EBI-739784">
        <id>Q9BW66</id>
    </interactant>
    <interactant intactId="EBI-748601">
        <id>Q9UHV2</id>
        <label>SERTAD1</label>
    </interactant>
    <organismsDiffer>false</organismsDiffer>
    <experiments>3</experiments>
</comment>
<comment type="interaction">
    <interactant intactId="EBI-739784">
        <id>Q9BW66</id>
    </interactant>
    <interactant intactId="EBI-297993">
        <id>P62316</id>
        <label>SNRPD2</label>
    </interactant>
    <organismsDiffer>false</organismsDiffer>
    <experiments>3</experiments>
</comment>
<comment type="interaction">
    <interactant intactId="EBI-739784">
        <id>Q9BW66</id>
    </interactant>
    <interactant intactId="EBI-9088579">
        <id>Q02086-2</id>
        <label>SP2</label>
    </interactant>
    <organismsDiffer>false</organismsDiffer>
    <experiments>3</experiments>
</comment>
<comment type="interaction">
    <interactant intactId="EBI-739784">
        <id>Q9BW66</id>
    </interactant>
    <interactant intactId="EBI-6872807">
        <id>Q8N0S2</id>
        <label>SYCE1</label>
    </interactant>
    <organismsDiffer>false</organismsDiffer>
    <experiments>3</experiments>
</comment>
<comment type="interaction">
    <interactant intactId="EBI-739784">
        <id>Q9BW66</id>
    </interactant>
    <interactant intactId="EBI-11139477">
        <id>Q96N21</id>
        <label>TEPSIN</label>
    </interactant>
    <organismsDiffer>false</organismsDiffer>
    <experiments>3</experiments>
</comment>
<comment type="interaction">
    <interactant intactId="EBI-739784">
        <id>Q9BW66</id>
    </interactant>
    <interactant intactId="EBI-18122152">
        <id>Q6F5E7</id>
        <label>TXNRD3NB</label>
    </interactant>
    <organismsDiffer>false</organismsDiffer>
    <experiments>3</experiments>
</comment>
<comment type="interaction">
    <interactant intactId="EBI-739784">
        <id>Q9BW66</id>
    </interactant>
    <interactant intactId="EBI-12287587">
        <id>B2RXF5</id>
        <label>ZBTB42</label>
    </interactant>
    <organismsDiffer>false</organismsDiffer>
    <experiments>3</experiments>
</comment>
<comment type="interaction">
    <interactant intactId="EBI-739784">
        <id>Q9BW66</id>
    </interactant>
    <interactant intactId="EBI-12884200">
        <id>P17023</id>
        <label>ZNF19</label>
    </interactant>
    <organismsDiffer>false</organismsDiffer>
    <experiments>3</experiments>
</comment>
<comment type="interaction">
    <interactant intactId="EBI-739784">
        <id>Q9BW66</id>
    </interactant>
    <interactant intactId="EBI-4395669">
        <id>Q6ZNG0</id>
        <label>ZNF620</label>
    </interactant>
    <organismsDiffer>false</organismsDiffer>
    <experiments>3</experiments>
</comment>
<comment type="subcellular location">
    <subcellularLocation>
        <location evidence="4">Nucleus</location>
    </subcellularLocation>
    <text evidence="4">Binds to nuclear under G1 conditions, and dissociates from chromatin with the start of DNA replication.</text>
</comment>
<comment type="alternative products">
    <event type="alternative splicing"/>
    <isoform>
        <id>Q9BW66-1</id>
        <name>1</name>
        <sequence type="displayed"/>
    </isoform>
    <isoform>
        <id>Q9BW66-2</id>
        <name>2</name>
        <sequence type="described" ref="VSP_045342 VSP_045343"/>
    </isoform>
    <isoform>
        <id>Q9BW66-3</id>
        <name>3</name>
        <sequence type="described" ref="VSP_046386"/>
    </isoform>
</comment>
<comment type="PTM">
    <text evidence="2">Phosphorylated by CDC7 but not by CDK2.</text>
</comment>
<comment type="similarity">
    <text evidence="12">Belongs to the CINP family.</text>
</comment>
<comment type="sequence caution" evidence="12">
    <conflict type="frameshift">
        <sequence resource="EMBL" id="BU174070"/>
    </conflict>
</comment>
<feature type="chain" id="PRO_0000326055" description="Cyclin-dependent kinase 2-interacting protein">
    <location>
        <begin position="1"/>
        <end position="212"/>
    </location>
</feature>
<feature type="coiled-coil region" evidence="1">
    <location>
        <begin position="73"/>
        <end position="107"/>
    </location>
</feature>
<feature type="binding site" evidence="7 14">
    <location>
        <position position="202"/>
    </location>
    <ligand>
        <name>Na(+)</name>
        <dbReference type="ChEBI" id="CHEBI:29101"/>
    </ligand>
</feature>
<feature type="modified residue" description="N-acetylmethionine" evidence="15">
    <location>
        <position position="1"/>
    </location>
</feature>
<feature type="modified residue" description="Phosphoserine" evidence="16">
    <location>
        <position position="69"/>
    </location>
</feature>
<feature type="modified residue" description="Phosphoserine" evidence="16">
    <location>
        <position position="73"/>
    </location>
</feature>
<feature type="splice variant" id="VSP_046386" description="In isoform 3." evidence="9">
    <original>MEA</original>
    <variation>MNGTIYANECQQIRHPNS</variation>
    <location>
        <begin position="1"/>
        <end position="3"/>
    </location>
</feature>
<feature type="splice variant" id="VSP_045342" description="In isoform 2." evidence="8">
    <original>TKIQVKMEKLSSTTKG</original>
    <variation>MRFRISSWRCTGRSCS</variation>
    <location>
        <begin position="103"/>
        <end position="118"/>
    </location>
</feature>
<feature type="splice variant" id="VSP_045343" description="In isoform 2." evidence="8">
    <location>
        <begin position="119"/>
        <end position="212"/>
    </location>
</feature>
<feature type="sequence variant" id="VAR_039979" description="In dbSNP:rs7011.">
    <original>R</original>
    <variation>H</variation>
    <location>
        <position position="164"/>
    </location>
</feature>
<feature type="sequence variant" id="VAR_039980" description="In a colorectal cancer sample; somatic mutation." evidence="3">
    <original>D</original>
    <variation>N</variation>
    <location>
        <position position="177"/>
    </location>
</feature>
<feature type="mutagenesis site" description="No effect on interaction with AFG2A and AFG2B." evidence="7">
    <location>
        <begin position="11"/>
        <end position="14"/>
    </location>
</feature>
<feature type="mutagenesis site" description="No effect on interaction with AFG2A and AFG2B." evidence="7">
    <original>RKIK</original>
    <variation>AAIA</variation>
    <location>
        <begin position="21"/>
        <end position="24"/>
    </location>
</feature>
<feature type="mutagenesis site" description="Loss of interaction with AFG2A and AFG2B." evidence="7">
    <original>L</original>
    <variation>R</variation>
    <location>
        <position position="162"/>
    </location>
</feature>
<feature type="mutagenesis site" description="No effect on interaction with AFG2A and AFG2B." evidence="7">
    <original>L</original>
    <variation>R</variation>
    <location>
        <position position="178"/>
    </location>
</feature>
<feature type="mutagenesis site" description="Strongly decreases interaction with AFG2A and AFG2B." evidence="7">
    <original>S</original>
    <variation>R</variation>
    <location>
        <position position="181"/>
    </location>
</feature>
<feature type="mutagenesis site" description="Strongly decreases interaction with AFG2A and AFG2B." evidence="7">
    <original>S</original>
    <variation>R</variation>
    <location>
        <position position="184"/>
    </location>
</feature>
<feature type="sequence conflict" description="In Ref. 1; AAF44747/AAF44748." evidence="12" ref="1">
    <original>R</original>
    <variation>K</variation>
    <location>
        <position position="157"/>
    </location>
</feature>
<feature type="sequence conflict" description="In Ref. 1; AAF44747/AAF44748." evidence="12" ref="1">
    <original>D</original>
    <variation>N</variation>
    <location>
        <position position="175"/>
    </location>
</feature>
<feature type="sequence conflict" description="In Ref. 1; AAF44747/AAF44748." evidence="12" ref="1">
    <original>SDSR</original>
    <variation>NDNK</variation>
    <location>
        <begin position="194"/>
        <end position="197"/>
    </location>
</feature>
<feature type="sequence conflict" description="In Ref. 6; BU174070." evidence="12" ref="6">
    <original>S</original>
    <variation>R</variation>
    <location>
        <position position="196"/>
    </location>
</feature>
<feature type="sequence conflict" description="In Ref. 1; AAF44747/AAF44748." evidence="12" ref="1">
    <original>S</original>
    <variation>N</variation>
    <location>
        <position position="202"/>
    </location>
</feature>
<feature type="sequence conflict" description="In Ref. 6; BU174070." evidence="12" ref="6">
    <original>RAL</original>
    <variation>PSSLTS</variation>
    <location>
        <begin position="210"/>
        <end position="212"/>
    </location>
</feature>
<feature type="helix" evidence="17">
    <location>
        <begin position="18"/>
        <end position="59"/>
    </location>
</feature>
<feature type="helix" evidence="17">
    <location>
        <begin position="71"/>
        <end position="127"/>
    </location>
</feature>
<feature type="helix" evidence="17">
    <location>
        <begin position="130"/>
        <end position="132"/>
    </location>
</feature>
<feature type="strand" evidence="17">
    <location>
        <begin position="136"/>
        <end position="139"/>
    </location>
</feature>
<feature type="helix" evidence="17">
    <location>
        <begin position="142"/>
        <end position="172"/>
    </location>
</feature>
<feature type="helix" evidence="17">
    <location>
        <begin position="176"/>
        <end position="188"/>
    </location>
</feature>
<feature type="helix" evidence="17">
    <location>
        <begin position="192"/>
        <end position="207"/>
    </location>
</feature>
<organism>
    <name type="scientific">Homo sapiens</name>
    <name type="common">Human</name>
    <dbReference type="NCBI Taxonomy" id="9606"/>
    <lineage>
        <taxon>Eukaryota</taxon>
        <taxon>Metazoa</taxon>
        <taxon>Chordata</taxon>
        <taxon>Craniata</taxon>
        <taxon>Vertebrata</taxon>
        <taxon>Euteleostomi</taxon>
        <taxon>Mammalia</taxon>
        <taxon>Eutheria</taxon>
        <taxon>Euarchontoglires</taxon>
        <taxon>Primates</taxon>
        <taxon>Haplorrhini</taxon>
        <taxon>Catarrhini</taxon>
        <taxon>Hominidae</taxon>
        <taxon>Homo</taxon>
    </lineage>
</organism>
<sequence length="212" mass="24324">MEAKTLGTVTPRKPVLSVSARKIKDNAADWHNLILKWETLNDAGFTTANNIANLKISLLNKDKIELDSSSPASKENEEKVCLEYNEELEKLCEELQATLDGLTKIQVKMEKLSSTTKGICELENYHYGEESKRPPLFHTWPTTHFYEVSHKLLEMYRKELLLKRTVAKELAHTGDPDLTLSYLSMWLHQPYVESDSRLHLESMLLETGHRAL</sequence>
<keyword id="KW-0002">3D-structure</keyword>
<keyword id="KW-0007">Acetylation</keyword>
<keyword id="KW-0025">Alternative splicing</keyword>
<keyword id="KW-0131">Cell cycle</keyword>
<keyword id="KW-0132">Cell division</keyword>
<keyword id="KW-0175">Coiled coil</keyword>
<keyword id="KW-0227">DNA damage</keyword>
<keyword id="KW-0234">DNA repair</keyword>
<keyword id="KW-0235">DNA replication</keyword>
<keyword id="KW-0539">Nucleus</keyword>
<keyword id="KW-0597">Phosphoprotein</keyword>
<keyword id="KW-1267">Proteomics identification</keyword>
<keyword id="KW-1185">Reference proteome</keyword>
<keyword id="KW-0690">Ribosome biogenesis</keyword>
<name>CINP_HUMAN</name>
<dbReference type="EMBL" id="AF228148">
    <property type="protein sequence ID" value="AAF44747.1"/>
    <property type="molecule type" value="mRNA"/>
</dbReference>
<dbReference type="EMBL" id="AF228149">
    <property type="protein sequence ID" value="AAF44748.1"/>
    <property type="molecule type" value="mRNA"/>
</dbReference>
<dbReference type="EMBL" id="AK056112">
    <property type="protein sequence ID" value="BAB71095.1"/>
    <property type="molecule type" value="mRNA"/>
</dbReference>
<dbReference type="EMBL" id="DA167716">
    <property type="status" value="NOT_ANNOTATED_CDS"/>
    <property type="molecule type" value="mRNA"/>
</dbReference>
<dbReference type="EMBL" id="CR457178">
    <property type="protein sequence ID" value="CAG33459.1"/>
    <property type="molecule type" value="mRNA"/>
</dbReference>
<dbReference type="EMBL" id="AL137229">
    <property type="status" value="NOT_ANNOTATED_CDS"/>
    <property type="molecule type" value="Genomic_DNA"/>
</dbReference>
<dbReference type="EMBL" id="CH471061">
    <property type="protein sequence ID" value="EAW81785.1"/>
    <property type="molecule type" value="Genomic_DNA"/>
</dbReference>
<dbReference type="EMBL" id="BC000600">
    <property type="protein sequence ID" value="AAH00600.1"/>
    <property type="molecule type" value="mRNA"/>
</dbReference>
<dbReference type="EMBL" id="BU174070">
    <property type="status" value="NOT_ANNOTATED_CDS"/>
    <property type="molecule type" value="mRNA"/>
</dbReference>
<dbReference type="CCDS" id="CCDS53915.1">
    <molecule id="Q9BW66-2"/>
</dbReference>
<dbReference type="CCDS" id="CCDS9972.1">
    <molecule id="Q9BW66-1"/>
</dbReference>
<dbReference type="RefSeq" id="NP_001306975.1">
    <molecule id="Q9BW66-2"/>
    <property type="nucleotide sequence ID" value="NM_001320046.2"/>
</dbReference>
<dbReference type="RefSeq" id="NP_116019.1">
    <molecule id="Q9BW66-1"/>
    <property type="nucleotide sequence ID" value="NM_032630.3"/>
</dbReference>
<dbReference type="PDB" id="8CIH">
    <property type="method" value="X-ray"/>
    <property type="resolution" value="2.00 A"/>
    <property type="chains" value="A/B=1-212"/>
</dbReference>
<dbReference type="PDB" id="8RHN">
    <property type="method" value="EM"/>
    <property type="resolution" value="4.50 A"/>
    <property type="chains" value="C/D=1-212"/>
</dbReference>
<dbReference type="PDBsum" id="8CIH"/>
<dbReference type="PDBsum" id="8RHN"/>
<dbReference type="EMDB" id="EMD-19177"/>
<dbReference type="SMR" id="Q9BW66"/>
<dbReference type="BioGRID" id="119604">
    <property type="interactions" value="68"/>
</dbReference>
<dbReference type="ComplexPortal" id="CPX-9182">
    <property type="entry name" value="SPATA5-SPATA5L1 ATPase complex"/>
</dbReference>
<dbReference type="DIP" id="DIP-49011N"/>
<dbReference type="FunCoup" id="Q9BW66">
    <property type="interactions" value="322"/>
</dbReference>
<dbReference type="IntAct" id="Q9BW66">
    <property type="interactions" value="56"/>
</dbReference>
<dbReference type="STRING" id="9606.ENSP00000216756"/>
<dbReference type="iPTMnet" id="Q9BW66"/>
<dbReference type="PhosphoSitePlus" id="Q9BW66"/>
<dbReference type="BioMuta" id="CINP"/>
<dbReference type="DMDM" id="74733401"/>
<dbReference type="jPOST" id="Q9BW66"/>
<dbReference type="MassIVE" id="Q9BW66"/>
<dbReference type="PaxDb" id="9606-ENSP00000216756"/>
<dbReference type="PeptideAtlas" id="Q9BW66"/>
<dbReference type="ProteomicsDB" id="27547"/>
<dbReference type="ProteomicsDB" id="27731"/>
<dbReference type="ProteomicsDB" id="79257">
    <molecule id="Q9BW66-1"/>
</dbReference>
<dbReference type="Pumba" id="Q9BW66"/>
<dbReference type="Antibodypedia" id="27836">
    <property type="antibodies" value="135 antibodies from 21 providers"/>
</dbReference>
<dbReference type="DNASU" id="51550"/>
<dbReference type="Ensembl" id="ENST00000216756.11">
    <molecule id="Q9BW66-1"/>
    <property type="protein sequence ID" value="ENSP00000216756.6"/>
    <property type="gene ID" value="ENSG00000100865.15"/>
</dbReference>
<dbReference type="Ensembl" id="ENST00000536961.6">
    <molecule id="Q9BW66-3"/>
    <property type="protein sequence ID" value="ENSP00000442057.2"/>
    <property type="gene ID" value="ENSG00000100865.15"/>
</dbReference>
<dbReference type="Ensembl" id="ENST00000541568.6">
    <molecule id="Q9BW66-2"/>
    <property type="protein sequence ID" value="ENSP00000442377.2"/>
    <property type="gene ID" value="ENSG00000100865.15"/>
</dbReference>
<dbReference type="Ensembl" id="ENST00000559514.5">
    <molecule id="Q9BW66-1"/>
    <property type="protein sequence ID" value="ENSP00000453839.1"/>
    <property type="gene ID" value="ENSG00000100865.15"/>
</dbReference>
<dbReference type="GeneID" id="51550"/>
<dbReference type="KEGG" id="hsa:51550"/>
<dbReference type="MANE-Select" id="ENST00000216756.11">
    <property type="protein sequence ID" value="ENSP00000216756.6"/>
    <property type="RefSeq nucleotide sequence ID" value="NM_032630.3"/>
    <property type="RefSeq protein sequence ID" value="NP_116019.1"/>
</dbReference>
<dbReference type="UCSC" id="uc001ylv.2">
    <molecule id="Q9BW66-1"/>
    <property type="organism name" value="human"/>
</dbReference>
<dbReference type="AGR" id="HGNC:23789"/>
<dbReference type="CTD" id="51550"/>
<dbReference type="DisGeNET" id="51550"/>
<dbReference type="GeneCards" id="CINP"/>
<dbReference type="HGNC" id="HGNC:23789">
    <property type="gene designation" value="CINP"/>
</dbReference>
<dbReference type="HPA" id="ENSG00000100865">
    <property type="expression patterns" value="Low tissue specificity"/>
</dbReference>
<dbReference type="MIM" id="613362">
    <property type="type" value="gene"/>
</dbReference>
<dbReference type="neXtProt" id="NX_Q9BW66"/>
<dbReference type="OpenTargets" id="ENSG00000100865"/>
<dbReference type="PharmGKB" id="PA165478684"/>
<dbReference type="VEuPathDB" id="HostDB:ENSG00000100865"/>
<dbReference type="eggNOG" id="ENOG502S092">
    <property type="taxonomic scope" value="Eukaryota"/>
</dbReference>
<dbReference type="GeneTree" id="ENSGT00390000015784"/>
<dbReference type="HOGENOM" id="CLU_077982_0_0_1"/>
<dbReference type="InParanoid" id="Q9BW66"/>
<dbReference type="OMA" id="HQPYVET"/>
<dbReference type="OrthoDB" id="9480363at2759"/>
<dbReference type="PAN-GO" id="Q9BW66">
    <property type="GO annotations" value="0 GO annotations based on evolutionary models"/>
</dbReference>
<dbReference type="PhylomeDB" id="Q9BW66"/>
<dbReference type="TreeFam" id="TF329462"/>
<dbReference type="PathwayCommons" id="Q9BW66"/>
<dbReference type="SignaLink" id="Q9BW66"/>
<dbReference type="BioGRID-ORCS" id="51550">
    <property type="hits" value="725 hits in 1180 CRISPR screens"/>
</dbReference>
<dbReference type="GenomeRNAi" id="51550"/>
<dbReference type="Pharos" id="Q9BW66">
    <property type="development level" value="Tbio"/>
</dbReference>
<dbReference type="PRO" id="PR:Q9BW66"/>
<dbReference type="Proteomes" id="UP000005640">
    <property type="component" value="Chromosome 14"/>
</dbReference>
<dbReference type="RNAct" id="Q9BW66">
    <property type="molecule type" value="protein"/>
</dbReference>
<dbReference type="Bgee" id="ENSG00000100865">
    <property type="expression patterns" value="Expressed in C1 segment of cervical spinal cord and 121 other cell types or tissues"/>
</dbReference>
<dbReference type="ExpressionAtlas" id="Q9BW66">
    <property type="expression patterns" value="baseline and differential"/>
</dbReference>
<dbReference type="GO" id="GO:0005634">
    <property type="term" value="C:nucleus"/>
    <property type="evidence" value="ECO:0007669"/>
    <property type="project" value="UniProtKB-SubCell"/>
</dbReference>
<dbReference type="GO" id="GO:1990275">
    <property type="term" value="F:preribosome binding"/>
    <property type="evidence" value="ECO:0000314"/>
    <property type="project" value="UniProtKB"/>
</dbReference>
<dbReference type="GO" id="GO:0051301">
    <property type="term" value="P:cell division"/>
    <property type="evidence" value="ECO:0007669"/>
    <property type="project" value="UniProtKB-KW"/>
</dbReference>
<dbReference type="GO" id="GO:0006281">
    <property type="term" value="P:DNA repair"/>
    <property type="evidence" value="ECO:0007669"/>
    <property type="project" value="UniProtKB-KW"/>
</dbReference>
<dbReference type="GO" id="GO:0006260">
    <property type="term" value="P:DNA replication"/>
    <property type="evidence" value="ECO:0007669"/>
    <property type="project" value="UniProtKB-KW"/>
</dbReference>
<dbReference type="GO" id="GO:0042273">
    <property type="term" value="P:ribosomal large subunit biogenesis"/>
    <property type="evidence" value="ECO:0000314"/>
    <property type="project" value="UniProtKB"/>
</dbReference>
<dbReference type="InterPro" id="IPR023250">
    <property type="entry name" value="Cyclin-dep_Kinase_2_interact"/>
</dbReference>
<dbReference type="PANTHER" id="PTHR15827">
    <property type="entry name" value="CYCLIN-DEPENDENT KINASE 2-INTERACTING PROTEIN"/>
    <property type="match status" value="1"/>
</dbReference>
<dbReference type="PANTHER" id="PTHR15827:SF2">
    <property type="entry name" value="CYCLIN-DEPENDENT KINASE 2-INTERACTING PROTEIN"/>
    <property type="match status" value="1"/>
</dbReference>
<dbReference type="PRINTS" id="PR02040">
    <property type="entry name" value="CDK2IP"/>
</dbReference>
<reference key="1">
    <citation type="journal article" date="2005" name="Cell Cycle">
        <title>A novel Cdk2 interactor is phosphorylated by Cdc7 and associates with components of the replication complexes.</title>
        <authorList>
            <person name="Grishina I."/>
            <person name="Lattes B."/>
        </authorList>
    </citation>
    <scope>NUCLEOTIDE SEQUENCE [MRNA] (ISOFORM 1)</scope>
    <scope>SUBUNIT</scope>
    <scope>FUNCTION</scope>
    <scope>INTERACTION WITH CDK2; CDC7; MCM2; MCM3; MCM4; MCM5; MCM6; MCM7 AND ORC2</scope>
    <scope>PHOSPHORYLATION</scope>
</reference>
<reference key="2">
    <citation type="journal article" date="2004" name="Nat. Genet.">
        <title>Complete sequencing and characterization of 21,243 full-length human cDNAs.</title>
        <authorList>
            <person name="Ota T."/>
            <person name="Suzuki Y."/>
            <person name="Nishikawa T."/>
            <person name="Otsuki T."/>
            <person name="Sugiyama T."/>
            <person name="Irie R."/>
            <person name="Wakamatsu A."/>
            <person name="Hayashi K."/>
            <person name="Sato H."/>
            <person name="Nagai K."/>
            <person name="Kimura K."/>
            <person name="Makita H."/>
            <person name="Sekine M."/>
            <person name="Obayashi M."/>
            <person name="Nishi T."/>
            <person name="Shibahara T."/>
            <person name="Tanaka T."/>
            <person name="Ishii S."/>
            <person name="Yamamoto J."/>
            <person name="Saito K."/>
            <person name="Kawai Y."/>
            <person name="Isono Y."/>
            <person name="Nakamura Y."/>
            <person name="Nagahari K."/>
            <person name="Murakami K."/>
            <person name="Yasuda T."/>
            <person name="Iwayanagi T."/>
            <person name="Wagatsuma M."/>
            <person name="Shiratori A."/>
            <person name="Sudo H."/>
            <person name="Hosoiri T."/>
            <person name="Kaku Y."/>
            <person name="Kodaira H."/>
            <person name="Kondo H."/>
            <person name="Sugawara M."/>
            <person name="Takahashi M."/>
            <person name="Kanda K."/>
            <person name="Yokoi T."/>
            <person name="Furuya T."/>
            <person name="Kikkawa E."/>
            <person name="Omura Y."/>
            <person name="Abe K."/>
            <person name="Kamihara K."/>
            <person name="Katsuta N."/>
            <person name="Sato K."/>
            <person name="Tanikawa M."/>
            <person name="Yamazaki M."/>
            <person name="Ninomiya K."/>
            <person name="Ishibashi T."/>
            <person name="Yamashita H."/>
            <person name="Murakawa K."/>
            <person name="Fujimori K."/>
            <person name="Tanai H."/>
            <person name="Kimata M."/>
            <person name="Watanabe M."/>
            <person name="Hiraoka S."/>
            <person name="Chiba Y."/>
            <person name="Ishida S."/>
            <person name="Ono Y."/>
            <person name="Takiguchi S."/>
            <person name="Watanabe S."/>
            <person name="Yosida M."/>
            <person name="Hotuta T."/>
            <person name="Kusano J."/>
            <person name="Kanehori K."/>
            <person name="Takahashi-Fujii A."/>
            <person name="Hara H."/>
            <person name="Tanase T.-O."/>
            <person name="Nomura Y."/>
            <person name="Togiya S."/>
            <person name="Komai F."/>
            <person name="Hara R."/>
            <person name="Takeuchi K."/>
            <person name="Arita M."/>
            <person name="Imose N."/>
            <person name="Musashino K."/>
            <person name="Yuuki H."/>
            <person name="Oshima A."/>
            <person name="Sasaki N."/>
            <person name="Aotsuka S."/>
            <person name="Yoshikawa Y."/>
            <person name="Matsunawa H."/>
            <person name="Ichihara T."/>
            <person name="Shiohata N."/>
            <person name="Sano S."/>
            <person name="Moriya S."/>
            <person name="Momiyama H."/>
            <person name="Satoh N."/>
            <person name="Takami S."/>
            <person name="Terashima Y."/>
            <person name="Suzuki O."/>
            <person name="Nakagawa S."/>
            <person name="Senoh A."/>
            <person name="Mizoguchi H."/>
            <person name="Goto Y."/>
            <person name="Shimizu F."/>
            <person name="Wakebe H."/>
            <person name="Hishigaki H."/>
            <person name="Watanabe T."/>
            <person name="Sugiyama A."/>
            <person name="Takemoto M."/>
            <person name="Kawakami B."/>
            <person name="Yamazaki M."/>
            <person name="Watanabe K."/>
            <person name="Kumagai A."/>
            <person name="Itakura S."/>
            <person name="Fukuzumi Y."/>
            <person name="Fujimori Y."/>
            <person name="Komiyama M."/>
            <person name="Tashiro H."/>
            <person name="Tanigami A."/>
            <person name="Fujiwara T."/>
            <person name="Ono T."/>
            <person name="Yamada K."/>
            <person name="Fujii Y."/>
            <person name="Ozaki K."/>
            <person name="Hirao M."/>
            <person name="Ohmori Y."/>
            <person name="Kawabata A."/>
            <person name="Hikiji T."/>
            <person name="Kobatake N."/>
            <person name="Inagaki H."/>
            <person name="Ikema Y."/>
            <person name="Okamoto S."/>
            <person name="Okitani R."/>
            <person name="Kawakami T."/>
            <person name="Noguchi S."/>
            <person name="Itoh T."/>
            <person name="Shigeta K."/>
            <person name="Senba T."/>
            <person name="Matsumura K."/>
            <person name="Nakajima Y."/>
            <person name="Mizuno T."/>
            <person name="Morinaga M."/>
            <person name="Sasaki M."/>
            <person name="Togashi T."/>
            <person name="Oyama M."/>
            <person name="Hata H."/>
            <person name="Watanabe M."/>
            <person name="Komatsu T."/>
            <person name="Mizushima-Sugano J."/>
            <person name="Satoh T."/>
            <person name="Shirai Y."/>
            <person name="Takahashi Y."/>
            <person name="Nakagawa K."/>
            <person name="Okumura K."/>
            <person name="Nagase T."/>
            <person name="Nomura N."/>
            <person name="Kikuchi H."/>
            <person name="Masuho Y."/>
            <person name="Yamashita R."/>
            <person name="Nakai K."/>
            <person name="Yada T."/>
            <person name="Nakamura Y."/>
            <person name="Ohara O."/>
            <person name="Isogai T."/>
            <person name="Sugano S."/>
        </authorList>
    </citation>
    <scope>NUCLEOTIDE SEQUENCE [LARGE SCALE MRNA] (ISOFORMS 1 AND 2)</scope>
    <source>
        <tissue>Amygdala</tissue>
    </source>
</reference>
<reference key="3">
    <citation type="submission" date="2004-06" db="EMBL/GenBank/DDBJ databases">
        <title>Cloning of human full open reading frames in Gateway(TM) system entry vector (pDONR201).</title>
        <authorList>
            <person name="Ebert L."/>
            <person name="Schick M."/>
            <person name="Neubert P."/>
            <person name="Schatten R."/>
            <person name="Henze S."/>
            <person name="Korn B."/>
        </authorList>
    </citation>
    <scope>NUCLEOTIDE SEQUENCE [LARGE SCALE MRNA] (ISOFORM 1)</scope>
</reference>
<reference key="4">
    <citation type="journal article" date="2003" name="Nature">
        <title>The DNA sequence and analysis of human chromosome 14.</title>
        <authorList>
            <person name="Heilig R."/>
            <person name="Eckenberg R."/>
            <person name="Petit J.-L."/>
            <person name="Fonknechten N."/>
            <person name="Da Silva C."/>
            <person name="Cattolico L."/>
            <person name="Levy M."/>
            <person name="Barbe V."/>
            <person name="De Berardinis V."/>
            <person name="Ureta-Vidal A."/>
            <person name="Pelletier E."/>
            <person name="Vico V."/>
            <person name="Anthouard V."/>
            <person name="Rowen L."/>
            <person name="Madan A."/>
            <person name="Qin S."/>
            <person name="Sun H."/>
            <person name="Du H."/>
            <person name="Pepin K."/>
            <person name="Artiguenave F."/>
            <person name="Robert C."/>
            <person name="Cruaud C."/>
            <person name="Bruels T."/>
            <person name="Jaillon O."/>
            <person name="Friedlander L."/>
            <person name="Samson G."/>
            <person name="Brottier P."/>
            <person name="Cure S."/>
            <person name="Segurens B."/>
            <person name="Aniere F."/>
            <person name="Samain S."/>
            <person name="Crespeau H."/>
            <person name="Abbasi N."/>
            <person name="Aiach N."/>
            <person name="Boscus D."/>
            <person name="Dickhoff R."/>
            <person name="Dors M."/>
            <person name="Dubois I."/>
            <person name="Friedman C."/>
            <person name="Gouyvenoux M."/>
            <person name="James R."/>
            <person name="Madan A."/>
            <person name="Mairey-Estrada B."/>
            <person name="Mangenot S."/>
            <person name="Martins N."/>
            <person name="Menard M."/>
            <person name="Oztas S."/>
            <person name="Ratcliffe A."/>
            <person name="Shaffer T."/>
            <person name="Trask B."/>
            <person name="Vacherie B."/>
            <person name="Bellemere C."/>
            <person name="Belser C."/>
            <person name="Besnard-Gonnet M."/>
            <person name="Bartol-Mavel D."/>
            <person name="Boutard M."/>
            <person name="Briez-Silla S."/>
            <person name="Combette S."/>
            <person name="Dufosse-Laurent V."/>
            <person name="Ferron C."/>
            <person name="Lechaplais C."/>
            <person name="Louesse C."/>
            <person name="Muselet D."/>
            <person name="Magdelenat G."/>
            <person name="Pateau E."/>
            <person name="Petit E."/>
            <person name="Sirvain-Trukniewicz P."/>
            <person name="Trybou A."/>
            <person name="Vega-Czarny N."/>
            <person name="Bataille E."/>
            <person name="Bluet E."/>
            <person name="Bordelais I."/>
            <person name="Dubois M."/>
            <person name="Dumont C."/>
            <person name="Guerin T."/>
            <person name="Haffray S."/>
            <person name="Hammadi R."/>
            <person name="Muanga J."/>
            <person name="Pellouin V."/>
            <person name="Robert D."/>
            <person name="Wunderle E."/>
            <person name="Gauguet G."/>
            <person name="Roy A."/>
            <person name="Sainte-Marthe L."/>
            <person name="Verdier J."/>
            <person name="Verdier-Discala C."/>
            <person name="Hillier L.W."/>
            <person name="Fulton L."/>
            <person name="McPherson J."/>
            <person name="Matsuda F."/>
            <person name="Wilson R."/>
            <person name="Scarpelli C."/>
            <person name="Gyapay G."/>
            <person name="Wincker P."/>
            <person name="Saurin W."/>
            <person name="Quetier F."/>
            <person name="Waterston R."/>
            <person name="Hood L."/>
            <person name="Weissenbach J."/>
        </authorList>
    </citation>
    <scope>NUCLEOTIDE SEQUENCE [LARGE SCALE GENOMIC DNA]</scope>
</reference>
<reference key="5">
    <citation type="submission" date="2005-07" db="EMBL/GenBank/DDBJ databases">
        <authorList>
            <person name="Mural R.J."/>
            <person name="Istrail S."/>
            <person name="Sutton G.G."/>
            <person name="Florea L."/>
            <person name="Halpern A.L."/>
            <person name="Mobarry C.M."/>
            <person name="Lippert R."/>
            <person name="Walenz B."/>
            <person name="Shatkay H."/>
            <person name="Dew I."/>
            <person name="Miller J.R."/>
            <person name="Flanigan M.J."/>
            <person name="Edwards N.J."/>
            <person name="Bolanos R."/>
            <person name="Fasulo D."/>
            <person name="Halldorsson B.V."/>
            <person name="Hannenhalli S."/>
            <person name="Turner R."/>
            <person name="Yooseph S."/>
            <person name="Lu F."/>
            <person name="Nusskern D.R."/>
            <person name="Shue B.C."/>
            <person name="Zheng X.H."/>
            <person name="Zhong F."/>
            <person name="Delcher A.L."/>
            <person name="Huson D.H."/>
            <person name="Kravitz S.A."/>
            <person name="Mouchard L."/>
            <person name="Reinert K."/>
            <person name="Remington K.A."/>
            <person name="Clark A.G."/>
            <person name="Waterman M.S."/>
            <person name="Eichler E.E."/>
            <person name="Adams M.D."/>
            <person name="Hunkapiller M.W."/>
            <person name="Myers E.W."/>
            <person name="Venter J.C."/>
        </authorList>
    </citation>
    <scope>NUCLEOTIDE SEQUENCE [LARGE SCALE GENOMIC DNA]</scope>
</reference>
<reference key="6">
    <citation type="journal article" date="2004" name="Genome Res.">
        <title>The status, quality, and expansion of the NIH full-length cDNA project: the Mammalian Gene Collection (MGC).</title>
        <authorList>
            <consortium name="The MGC Project Team"/>
        </authorList>
    </citation>
    <scope>NUCLEOTIDE SEQUENCE [LARGE SCALE MRNA] (ISOFORMS 1 AND 3)</scope>
    <source>
        <tissue>Pancreatic carcinoma</tissue>
        <tissue>Skin</tissue>
    </source>
</reference>
<reference key="7">
    <citation type="journal article" date="2008" name="Proc. Natl. Acad. Sci. U.S.A.">
        <title>A quantitative atlas of mitotic phosphorylation.</title>
        <authorList>
            <person name="Dephoure N."/>
            <person name="Zhou C."/>
            <person name="Villen J."/>
            <person name="Beausoleil S.A."/>
            <person name="Bakalarski C.E."/>
            <person name="Elledge S.J."/>
            <person name="Gygi S.P."/>
        </authorList>
    </citation>
    <scope>IDENTIFICATION BY MASS SPECTROMETRY [LARGE SCALE ANALYSIS]</scope>
    <source>
        <tissue>Cervix carcinoma</tissue>
    </source>
</reference>
<reference key="8">
    <citation type="journal article" date="2009" name="Anal. Chem.">
        <title>Lys-N and trypsin cover complementary parts of the phosphoproteome in a refined SCX-based approach.</title>
        <authorList>
            <person name="Gauci S."/>
            <person name="Helbig A.O."/>
            <person name="Slijper M."/>
            <person name="Krijgsveld J."/>
            <person name="Heck A.J."/>
            <person name="Mohammed S."/>
        </authorList>
    </citation>
    <scope>IDENTIFICATION BY MASS SPECTROMETRY [LARGE SCALE ANALYSIS]</scope>
</reference>
<reference key="9">
    <citation type="journal article" date="2009" name="Proc. Natl. Acad. Sci. U.S.A.">
        <title>Functional genomic screens identify CINP as a genome maintenance protein.</title>
        <authorList>
            <person name="Lovejoy C.A."/>
            <person name="Xu X."/>
            <person name="Bansbach C.E."/>
            <person name="Glick G.G."/>
            <person name="Zhao R."/>
            <person name="Ye F."/>
            <person name="Sirbu B.M."/>
            <person name="Titus L.C."/>
            <person name="Shyr Y."/>
            <person name="Cortez D."/>
        </authorList>
    </citation>
    <scope>FUNCTION</scope>
    <scope>INTERACTION WITH ATRIP</scope>
    <scope>SUBCELLULAR LOCATION</scope>
</reference>
<reference key="10">
    <citation type="journal article" date="2011" name="BMC Syst. Biol.">
        <title>Initial characterization of the human central proteome.</title>
        <authorList>
            <person name="Burkard T.R."/>
            <person name="Planyavsky M."/>
            <person name="Kaupe I."/>
            <person name="Breitwieser F.P."/>
            <person name="Buerckstuemmer T."/>
            <person name="Bennett K.L."/>
            <person name="Superti-Furga G."/>
            <person name="Colinge J."/>
        </authorList>
    </citation>
    <scope>IDENTIFICATION BY MASS SPECTROMETRY [LARGE SCALE ANALYSIS]</scope>
</reference>
<reference key="11">
    <citation type="journal article" date="2011" name="Nat. Genet.">
        <title>CEP152 is a genome maintenance protein disrupted in Seckel syndrome.</title>
        <authorList>
            <person name="Kalay E."/>
            <person name="Yigit G."/>
            <person name="Aslan Y."/>
            <person name="Brown K.E."/>
            <person name="Pohl E."/>
            <person name="Bicknell L.S."/>
            <person name="Kayserili H."/>
            <person name="Li Y."/>
            <person name="Tuysuz B."/>
            <person name="Nurnberg G."/>
            <person name="Kiess W."/>
            <person name="Koegl M."/>
            <person name="Baessmann I."/>
            <person name="Buruk K."/>
            <person name="Toraman B."/>
            <person name="Kayipmaz S."/>
            <person name="Kul S."/>
            <person name="Ikbal M."/>
            <person name="Turner D.J."/>
            <person name="Taylor M.S."/>
            <person name="Aerts J."/>
            <person name="Scott C."/>
            <person name="Milstein K."/>
            <person name="Dollfus H."/>
            <person name="Wieczorek D."/>
            <person name="Brunner H.G."/>
            <person name="Hurles M."/>
            <person name="Jackson A.P."/>
            <person name="Rauch A."/>
            <person name="Nurnberg P."/>
            <person name="Karaguzel A."/>
            <person name="Wollnik B."/>
        </authorList>
    </citation>
    <scope>INTERACTION WITH CEP152</scope>
</reference>
<reference key="12">
    <citation type="journal article" date="2012" name="Proc. Natl. Acad. Sci. U.S.A.">
        <title>N-terminal acetylome analyses and functional insights of the N-terminal acetyltransferase NatB.</title>
        <authorList>
            <person name="Van Damme P."/>
            <person name="Lasa M."/>
            <person name="Polevoda B."/>
            <person name="Gazquez C."/>
            <person name="Elosegui-Artola A."/>
            <person name="Kim D.S."/>
            <person name="De Juan-Pardo E."/>
            <person name="Demeyer K."/>
            <person name="Hole K."/>
            <person name="Larrea E."/>
            <person name="Timmerman E."/>
            <person name="Prieto J."/>
            <person name="Arnesen T."/>
            <person name="Sherman F."/>
            <person name="Gevaert K."/>
            <person name="Aldabe R."/>
        </authorList>
    </citation>
    <scope>ACETYLATION [LARGE SCALE ANALYSIS] AT MET-1</scope>
    <scope>IDENTIFICATION BY MASS SPECTROMETRY [LARGE SCALE ANALYSIS]</scope>
</reference>
<reference key="13">
    <citation type="journal article" date="2013" name="J. Proteome Res.">
        <title>Toward a comprehensive characterization of a human cancer cell phosphoproteome.</title>
        <authorList>
            <person name="Zhou H."/>
            <person name="Di Palma S."/>
            <person name="Preisinger C."/>
            <person name="Peng M."/>
            <person name="Polat A.N."/>
            <person name="Heck A.J."/>
            <person name="Mohammed S."/>
        </authorList>
    </citation>
    <scope>PHOSPHORYLATION [LARGE SCALE ANALYSIS] AT SER-69 AND SER-73</scope>
    <scope>IDENTIFICATION BY MASS SPECTROMETRY [LARGE SCALE ANALYSIS]</scope>
    <source>
        <tissue>Cervix carcinoma</tissue>
        <tissue>Erythroleukemia</tissue>
    </source>
</reference>
<reference key="14">
    <citation type="journal article" date="2022" name="Cell Rep.">
        <title>Labeling of heterochronic ribosomes reveals C1ORF109 and SPATA5 control a late step in human ribosome assembly.</title>
        <authorList>
            <person name="Ni C."/>
            <person name="Schmitz D.A."/>
            <person name="Lee J."/>
            <person name="Pawlowski K."/>
            <person name="Wu J."/>
            <person name="Buszczak M."/>
        </authorList>
    </citation>
    <scope>FUNCTION</scope>
    <scope>INTERACTION WITH AIRIM</scope>
    <scope>INTERACTION WITH PRE-60S RIBOSOMAL PARTICLES</scope>
</reference>
<reference evidence="14" key="15">
    <citation type="journal article" date="2024" name="Cell">
        <title>The SPATA5-SPATA5L1 ATPase complex directs replisome proteostasis to ensure genome integrity.</title>
        <authorList>
            <person name="Krishnamoorthy V."/>
            <person name="Foglizzo M."/>
            <person name="Dilley R.L."/>
            <person name="Wu A."/>
            <person name="Datta A."/>
            <person name="Dutta P."/>
            <person name="Campbell L.J."/>
            <person name="Degtjarik O."/>
            <person name="Musgrove L.J."/>
            <person name="Calabrese A.N."/>
            <person name="Zeqiraj E."/>
            <person name="Greenberg R.A."/>
        </authorList>
    </citation>
    <scope>X-RAY CRYSTALLOGRAPHY (2.0 ANGSTROMS) OF 17-210 IN COMPLEX WITH SODIUM</scope>
    <scope>FUNCTION</scope>
    <scope>SUBUNIT</scope>
    <scope>MUTAGENESIS OF 11-PRO--PRO-14; 21-ARG--LYS-24; LEU-162; LEU-178; SER-181 AND SER-184</scope>
</reference>
<reference key="16">
    <citation type="journal article" date="2006" name="Science">
        <title>The consensus coding sequences of human breast and colorectal cancers.</title>
        <authorList>
            <person name="Sjoeblom T."/>
            <person name="Jones S."/>
            <person name="Wood L.D."/>
            <person name="Parsons D.W."/>
            <person name="Lin J."/>
            <person name="Barber T.D."/>
            <person name="Mandelker D."/>
            <person name="Leary R.J."/>
            <person name="Ptak J."/>
            <person name="Silliman N."/>
            <person name="Szabo S."/>
            <person name="Buckhaults P."/>
            <person name="Farrell C."/>
            <person name="Meeh P."/>
            <person name="Markowitz S.D."/>
            <person name="Willis J."/>
            <person name="Dawson D."/>
            <person name="Willson J.K.V."/>
            <person name="Gazdar A.F."/>
            <person name="Hartigan J."/>
            <person name="Wu L."/>
            <person name="Liu C."/>
            <person name="Parmigiani G."/>
            <person name="Park B.H."/>
            <person name="Bachman K.E."/>
            <person name="Papadopoulos N."/>
            <person name="Vogelstein B."/>
            <person name="Kinzler K.W."/>
            <person name="Velculescu V.E."/>
        </authorList>
    </citation>
    <scope>VARIANT [LARGE SCALE ANALYSIS] ASN-177</scope>
</reference>